<accession>O16796</accession>
<accession>Q8ITZ3</accession>
<feature type="chain" id="PRO_0000248422" description="Neprilysin-11">
    <location>
        <begin position="1"/>
        <end position="848"/>
    </location>
</feature>
<feature type="topological domain" description="Cytoplasmic" evidence="2">
    <location>
        <begin position="1"/>
        <end position="74"/>
    </location>
</feature>
<feature type="transmembrane region" description="Helical; Signal-anchor for type II membrane protein" evidence="2">
    <location>
        <begin position="75"/>
        <end position="95"/>
    </location>
</feature>
<feature type="topological domain" description="Extracellular" evidence="2">
    <location>
        <begin position="96"/>
        <end position="848"/>
    </location>
</feature>
<feature type="domain" description="Peptidase M13" evidence="3">
    <location>
        <begin position="160"/>
        <end position="848"/>
    </location>
</feature>
<feature type="region of interest" description="Disordered" evidence="5">
    <location>
        <begin position="108"/>
        <end position="161"/>
    </location>
</feature>
<feature type="compositionally biased region" description="Pro residues" evidence="5">
    <location>
        <begin position="133"/>
        <end position="144"/>
    </location>
</feature>
<feature type="active site" evidence="3 4">
    <location>
        <position position="683"/>
    </location>
</feature>
<feature type="active site" description="Proton donor" evidence="3">
    <location>
        <position position="748"/>
    </location>
</feature>
<feature type="binding site" evidence="3 4">
    <location>
        <position position="682"/>
    </location>
    <ligand>
        <name>Zn(2+)</name>
        <dbReference type="ChEBI" id="CHEBI:29105"/>
        <note>catalytic</note>
    </ligand>
</feature>
<feature type="binding site" evidence="3 4">
    <location>
        <position position="686"/>
    </location>
    <ligand>
        <name>Zn(2+)</name>
        <dbReference type="ChEBI" id="CHEBI:29105"/>
        <note>catalytic</note>
    </ligand>
</feature>
<feature type="binding site" evidence="3">
    <location>
        <position position="744"/>
    </location>
    <ligand>
        <name>Zn(2+)</name>
        <dbReference type="ChEBI" id="CHEBI:29105"/>
        <note>catalytic</note>
    </ligand>
</feature>
<feature type="glycosylation site" description="N-linked (GlcNAc...) asparagine" evidence="2">
    <location>
        <position position="178"/>
    </location>
</feature>
<feature type="glycosylation site" description="N-linked (GlcNAc...) asparagine" evidence="2">
    <location>
        <position position="249"/>
    </location>
</feature>
<feature type="glycosylation site" description="N-linked (GlcNAc...) asparagine" evidence="2">
    <location>
        <position position="284"/>
    </location>
</feature>
<feature type="glycosylation site" description="N-linked (GlcNAc...) asparagine" evidence="2">
    <location>
        <position position="312"/>
    </location>
</feature>
<feature type="glycosylation site" description="N-linked (GlcNAc...) asparagine" evidence="2">
    <location>
        <position position="337"/>
    </location>
</feature>
<feature type="glycosylation site" description="N-linked (GlcNAc...) asparagine" evidence="2">
    <location>
        <position position="364"/>
    </location>
</feature>
<feature type="glycosylation site" description="N-linked (GlcNAc...) asparagine" evidence="2">
    <location>
        <position position="398"/>
    </location>
</feature>
<feature type="glycosylation site" description="N-linked (GlcNAc...) asparagine" evidence="2">
    <location>
        <position position="438"/>
    </location>
</feature>
<feature type="glycosylation site" description="N-linked (GlcNAc...) asparagine" evidence="6 7">
    <location>
        <position position="726"/>
    </location>
</feature>
<feature type="disulfide bond" evidence="3">
    <location>
        <begin position="161"/>
        <end position="166"/>
    </location>
</feature>
<feature type="disulfide bond" evidence="3">
    <location>
        <begin position="184"/>
        <end position="833"/>
    </location>
</feature>
<feature type="disulfide bond" evidence="3">
    <location>
        <begin position="192"/>
        <end position="793"/>
    </location>
</feature>
<feature type="disulfide bond" evidence="3">
    <location>
        <begin position="247"/>
        <end position="509"/>
    </location>
</feature>
<feature type="disulfide bond" evidence="3">
    <location>
        <begin position="719"/>
        <end position="845"/>
    </location>
</feature>
<feature type="splice variant" id="VSP_020295" description="In isoform b." evidence="8">
    <original>FWCGKKKEAAAMQQVLTDEHSPEVFRVIGVLSNMQAFADVYKCPRNAPVNPDH</original>
    <variation>VSCLPVLKFVVKLAKMNQSFTKNPSD</variation>
    <location>
        <begin position="791"/>
        <end position="843"/>
    </location>
</feature>
<reference key="1">
    <citation type="journal article" date="1998" name="Science">
        <title>Genome sequence of the nematode C. elegans: a platform for investigating biology.</title>
        <authorList>
            <consortium name="The C. elegans sequencing consortium"/>
        </authorList>
    </citation>
    <scope>NUCLEOTIDE SEQUENCE [LARGE SCALE GENOMIC DNA]</scope>
    <scope>ALTERNATIVE SPLICING</scope>
    <source>
        <strain>Bristol N2</strain>
    </source>
</reference>
<reference key="2">
    <citation type="journal article" date="2003" name="Nat. Biotechnol.">
        <title>Lectin affinity capture, isotope-coded tagging and mass spectrometry to identify N-linked glycoproteins.</title>
        <authorList>
            <person name="Kaji H."/>
            <person name="Saito H."/>
            <person name="Yamauchi Y."/>
            <person name="Shinkawa T."/>
            <person name="Taoka M."/>
            <person name="Hirabayashi J."/>
            <person name="Kasai K."/>
            <person name="Takahashi N."/>
            <person name="Isobe T."/>
        </authorList>
    </citation>
    <scope>GLYCOSYLATION [LARGE SCALE ANALYSIS] AT ASN-726</scope>
    <scope>IDENTIFICATION BY MASS SPECTROMETRY</scope>
    <source>
        <strain>Bristol N2</strain>
    </source>
</reference>
<reference key="3">
    <citation type="journal article" date="2007" name="Mol. Cell. Proteomics">
        <title>Proteomics reveals N-linked glycoprotein diversity in Caenorhabditis elegans and suggests an atypical translocation mechanism for integral membrane proteins.</title>
        <authorList>
            <person name="Kaji H."/>
            <person name="Kamiie J."/>
            <person name="Kawakami H."/>
            <person name="Kido K."/>
            <person name="Yamauchi Y."/>
            <person name="Shinkawa T."/>
            <person name="Taoka M."/>
            <person name="Takahashi N."/>
            <person name="Isobe T."/>
        </authorList>
    </citation>
    <scope>GLYCOSYLATION [LARGE SCALE ANALYSIS] AT ASN-726</scope>
    <scope>IDENTIFICATION BY MASS SPECTROMETRY</scope>
    <source>
        <strain>Bristol N2</strain>
    </source>
</reference>
<protein>
    <recommendedName>
        <fullName>Neprilysin-11</fullName>
        <ecNumber>3.4.24.-</ecNumber>
    </recommendedName>
</protein>
<proteinExistence type="evidence at protein level"/>
<organism>
    <name type="scientific">Caenorhabditis elegans</name>
    <dbReference type="NCBI Taxonomy" id="6239"/>
    <lineage>
        <taxon>Eukaryota</taxon>
        <taxon>Metazoa</taxon>
        <taxon>Ecdysozoa</taxon>
        <taxon>Nematoda</taxon>
        <taxon>Chromadorea</taxon>
        <taxon>Rhabditida</taxon>
        <taxon>Rhabditina</taxon>
        <taxon>Rhabditomorpha</taxon>
        <taxon>Rhabditoidea</taxon>
        <taxon>Rhabditidae</taxon>
        <taxon>Peloderinae</taxon>
        <taxon>Caenorhabditis</taxon>
    </lineage>
</organism>
<comment type="function">
    <text evidence="1">Probable cell surface protease.</text>
</comment>
<comment type="cofactor">
    <cofactor evidence="1">
        <name>Zn(2+)</name>
        <dbReference type="ChEBI" id="CHEBI:29105"/>
    </cofactor>
    <text evidence="1">Binds 1 zinc ion per subunit.</text>
</comment>
<comment type="subcellular location">
    <subcellularLocation>
        <location evidence="8">Cell membrane</location>
        <topology evidence="8">Single-pass type II membrane protein</topology>
    </subcellularLocation>
</comment>
<comment type="alternative products">
    <event type="alternative splicing"/>
    <isoform>
        <id>O16796-1</id>
        <name>a</name>
        <sequence type="displayed"/>
    </isoform>
    <isoform>
        <id>O16796-2</id>
        <name>b</name>
        <sequence type="described" ref="VSP_020295"/>
    </isoform>
</comment>
<comment type="similarity">
    <text evidence="3 8">Belongs to the peptidase M13 family.</text>
</comment>
<evidence type="ECO:0000250" key="1"/>
<evidence type="ECO:0000255" key="2"/>
<evidence type="ECO:0000255" key="3">
    <source>
        <dbReference type="PROSITE-ProRule" id="PRU01233"/>
    </source>
</evidence>
<evidence type="ECO:0000255" key="4">
    <source>
        <dbReference type="PROSITE-ProRule" id="PRU10095"/>
    </source>
</evidence>
<evidence type="ECO:0000256" key="5">
    <source>
        <dbReference type="SAM" id="MobiDB-lite"/>
    </source>
</evidence>
<evidence type="ECO:0000269" key="6">
    <source>
    </source>
</evidence>
<evidence type="ECO:0000269" key="7">
    <source>
    </source>
</evidence>
<evidence type="ECO:0000305" key="8"/>
<gene>
    <name type="primary">nep-11</name>
    <name type="ORF">F18A12.8</name>
</gene>
<keyword id="KW-0025">Alternative splicing</keyword>
<keyword id="KW-1003">Cell membrane</keyword>
<keyword id="KW-1015">Disulfide bond</keyword>
<keyword id="KW-0325">Glycoprotein</keyword>
<keyword id="KW-0378">Hydrolase</keyword>
<keyword id="KW-0472">Membrane</keyword>
<keyword id="KW-0479">Metal-binding</keyword>
<keyword id="KW-0482">Metalloprotease</keyword>
<keyword id="KW-0645">Protease</keyword>
<keyword id="KW-1185">Reference proteome</keyword>
<keyword id="KW-0735">Signal-anchor</keyword>
<keyword id="KW-0812">Transmembrane</keyword>
<keyword id="KW-1133">Transmembrane helix</keyword>
<keyword id="KW-0862">Zinc</keyword>
<name>NPL11_CAEEL</name>
<sequence>MPFGNDPPDYVHLRSNESQMQLITISENSDIPTPSGSPCFNAPARDEAPSVIFIPGKKFQGTFRWWKSRTTMEKLLLPVLLLFCLLTAVLLAVIINTDKRIEAMKTDHATQTEHAGFGDPTENPTKTAEDPRVPPIVPEAPTSPEPEVTTSTEKPKEPEVCSTPGCVRAATHFLNAMNTSVDPCDDFFEFACGQWNDQHPIPDDMYGFGTFAYAREQVRQQLRVLLEQEVVTESESINMARATYRSCMNKTQLDELMTGPLFETLTELGEWPLLQENWDKTKFNFTSLLVNSRRDYGVDVFFQLYIYADSKNTSRNTLFIDQSTLALGRGTRDYYLNTTLFSSHMTAYRKYLRQIAHLLKTDGNLTRSESEMNADIEKIIDFEIELAKIIVAEDERRNNTRLYNKRQIQDLYNLLPQVDWVPFFQSIAPSDLTHLFHNETEIIICEIEYLQHVSELIEKTDVGLLTNYVLWRVVQSNVRYLDERFEDIKQDFLKVMTGQQQSPPRWKDCAQVPSTVLPLAAGAIYVQAHFQESDKHEALRMIMHLRNSFADLVRQNDWMDEETKAVAIEKANSMINNIGYPDVTNDLPKLDKQYLGLSISDSDTYYYIMKKSVVWMQSREFQKLTKPFDKHEFDISPAVVNAFYSPEKNAITFPAGILQPPFFSGTFPKAVNYGAIGAVIGHEITHGFDDQGSQYDKDGNLHNWWSESSLNSFDTRRRCIVEQYGNYTVPKTNFRVNGKLTQGENIADNGGVKEAFQAYQKYVTENGEEPRLPGLQQYTNEQIFFVSYAHFWCGKKKEAAAMQQVLTDEHSPEVFRVIGVLSNMQAFADVYKCPRNAPVNPDHKCIVW</sequence>
<dbReference type="EC" id="3.4.24.-"/>
<dbReference type="EMBL" id="FO080567">
    <property type="protein sequence ID" value="CCD64733.1"/>
    <property type="molecule type" value="Genomic_DNA"/>
</dbReference>
<dbReference type="EMBL" id="FO080567">
    <property type="protein sequence ID" value="CCD64734.1"/>
    <property type="molecule type" value="Genomic_DNA"/>
</dbReference>
<dbReference type="PIR" id="C88099">
    <property type="entry name" value="C88099"/>
</dbReference>
<dbReference type="RefSeq" id="NP_494538.1">
    <molecule id="O16796-1"/>
    <property type="nucleotide sequence ID" value="NM_062137.6"/>
</dbReference>
<dbReference type="RefSeq" id="NP_871928.1">
    <property type="nucleotide sequence ID" value="NM_182128.3"/>
</dbReference>
<dbReference type="SMR" id="O16796"/>
<dbReference type="BioGRID" id="39042">
    <property type="interactions" value="1"/>
</dbReference>
<dbReference type="FunCoup" id="O16796">
    <property type="interactions" value="315"/>
</dbReference>
<dbReference type="STRING" id="6239.F18A12.8a.1"/>
<dbReference type="MEROPS" id="M13.A16"/>
<dbReference type="GlyCosmos" id="O16796">
    <property type="glycosylation" value="9 sites, No reported glycans"/>
</dbReference>
<dbReference type="iPTMnet" id="O16796"/>
<dbReference type="PaxDb" id="6239-F18A12.8a"/>
<dbReference type="PeptideAtlas" id="O16796"/>
<dbReference type="EnsemblMetazoa" id="F18A12.8a.1">
    <molecule id="O16796-1"/>
    <property type="protein sequence ID" value="F18A12.8a.1"/>
    <property type="gene ID" value="WBGene00017557"/>
</dbReference>
<dbReference type="EnsemblMetazoa" id="F18A12.8b.1">
    <property type="protein sequence ID" value="F18A12.8b.1"/>
    <property type="gene ID" value="WBGene00017557"/>
</dbReference>
<dbReference type="GeneID" id="173685"/>
<dbReference type="KEGG" id="cel:CELE_F18A12.8"/>
<dbReference type="UCSC" id="T05A8.4">
    <molecule id="O16796-1"/>
    <property type="organism name" value="c. elegans"/>
</dbReference>
<dbReference type="AGR" id="WB:WBGene00017557"/>
<dbReference type="CTD" id="173685"/>
<dbReference type="WormBase" id="F18A12.8a">
    <molecule id="O16796-1"/>
    <property type="protein sequence ID" value="CE23669"/>
    <property type="gene ID" value="WBGene00017557"/>
    <property type="gene designation" value="nep-11"/>
</dbReference>
<dbReference type="WormBase" id="F18A12.8b">
    <property type="protein sequence ID" value="CE32629"/>
    <property type="gene ID" value="WBGene00017557"/>
    <property type="gene designation" value="nep-11"/>
</dbReference>
<dbReference type="eggNOG" id="KOG3624">
    <property type="taxonomic scope" value="Eukaryota"/>
</dbReference>
<dbReference type="GeneTree" id="ENSGT00940000164877"/>
<dbReference type="HOGENOM" id="CLU_006187_4_0_1"/>
<dbReference type="InParanoid" id="O16796"/>
<dbReference type="OMA" id="RGARDYY"/>
<dbReference type="OrthoDB" id="6475849at2759"/>
<dbReference type="PhylomeDB" id="O16796"/>
<dbReference type="Reactome" id="R-CEL-2022377">
    <property type="pathway name" value="Metabolism of Angiotensinogen to Angiotensins"/>
</dbReference>
<dbReference type="Reactome" id="R-CEL-5578768">
    <property type="pathway name" value="Physiological factors"/>
</dbReference>
<dbReference type="Reactome" id="R-CEL-6798695">
    <property type="pathway name" value="Neutrophil degranulation"/>
</dbReference>
<dbReference type="PRO" id="PR:O16796"/>
<dbReference type="Proteomes" id="UP000001940">
    <property type="component" value="Chromosome II"/>
</dbReference>
<dbReference type="Bgee" id="WBGene00017557">
    <property type="expression patterns" value="Expressed in larva and 4 other cell types or tissues"/>
</dbReference>
<dbReference type="GO" id="GO:0005886">
    <property type="term" value="C:plasma membrane"/>
    <property type="evidence" value="ECO:0000318"/>
    <property type="project" value="GO_Central"/>
</dbReference>
<dbReference type="GO" id="GO:0046872">
    <property type="term" value="F:metal ion binding"/>
    <property type="evidence" value="ECO:0007669"/>
    <property type="project" value="UniProtKB-KW"/>
</dbReference>
<dbReference type="GO" id="GO:0004222">
    <property type="term" value="F:metalloendopeptidase activity"/>
    <property type="evidence" value="ECO:0000318"/>
    <property type="project" value="GO_Central"/>
</dbReference>
<dbReference type="GO" id="GO:0016485">
    <property type="term" value="P:protein processing"/>
    <property type="evidence" value="ECO:0000318"/>
    <property type="project" value="GO_Central"/>
</dbReference>
<dbReference type="CDD" id="cd08662">
    <property type="entry name" value="M13"/>
    <property type="match status" value="1"/>
</dbReference>
<dbReference type="Gene3D" id="3.40.390.10">
    <property type="entry name" value="Collagenase (Catalytic Domain)"/>
    <property type="match status" value="1"/>
</dbReference>
<dbReference type="Gene3D" id="1.10.1380.10">
    <property type="entry name" value="Neutral endopeptidase , domain2"/>
    <property type="match status" value="1"/>
</dbReference>
<dbReference type="InterPro" id="IPR024079">
    <property type="entry name" value="MetalloPept_cat_dom_sf"/>
</dbReference>
<dbReference type="InterPro" id="IPR000718">
    <property type="entry name" value="Peptidase_M13"/>
</dbReference>
<dbReference type="InterPro" id="IPR018497">
    <property type="entry name" value="Peptidase_M13_C"/>
</dbReference>
<dbReference type="InterPro" id="IPR042089">
    <property type="entry name" value="Peptidase_M13_dom_2"/>
</dbReference>
<dbReference type="InterPro" id="IPR008753">
    <property type="entry name" value="Peptidase_M13_N"/>
</dbReference>
<dbReference type="PANTHER" id="PTHR11733:SF239">
    <property type="entry name" value="NEPRILYSIN-11"/>
    <property type="match status" value="1"/>
</dbReference>
<dbReference type="PANTHER" id="PTHR11733">
    <property type="entry name" value="ZINC METALLOPROTEASE FAMILY M13 NEPRILYSIN-RELATED"/>
    <property type="match status" value="1"/>
</dbReference>
<dbReference type="Pfam" id="PF01431">
    <property type="entry name" value="Peptidase_M13"/>
    <property type="match status" value="1"/>
</dbReference>
<dbReference type="Pfam" id="PF05649">
    <property type="entry name" value="Peptidase_M13_N"/>
    <property type="match status" value="1"/>
</dbReference>
<dbReference type="PRINTS" id="PR00786">
    <property type="entry name" value="NEPRILYSIN"/>
</dbReference>
<dbReference type="SUPFAM" id="SSF55486">
    <property type="entry name" value="Metalloproteases ('zincins'), catalytic domain"/>
    <property type="match status" value="1"/>
</dbReference>
<dbReference type="PROSITE" id="PS51885">
    <property type="entry name" value="NEPRILYSIN"/>
    <property type="match status" value="1"/>
</dbReference>
<dbReference type="PROSITE" id="PS00142">
    <property type="entry name" value="ZINC_PROTEASE"/>
    <property type="match status" value="1"/>
</dbReference>